<gene>
    <name type="primary">CDKE-1</name>
    <name type="synonym">CDK8</name>
    <name evidence="11" type="synonym">HEN3</name>
    <name evidence="8" type="synonym">RAO1</name>
    <name evidence="10" type="ordered locus">At5g63610</name>
    <name evidence="12" type="ORF">MBK5.8</name>
</gene>
<organism>
    <name type="scientific">Arabidopsis thaliana</name>
    <name type="common">Mouse-ear cress</name>
    <dbReference type="NCBI Taxonomy" id="3702"/>
    <lineage>
        <taxon>Eukaryota</taxon>
        <taxon>Viridiplantae</taxon>
        <taxon>Streptophyta</taxon>
        <taxon>Embryophyta</taxon>
        <taxon>Tracheophyta</taxon>
        <taxon>Spermatophyta</taxon>
        <taxon>Magnoliopsida</taxon>
        <taxon>eudicotyledons</taxon>
        <taxon>Gunneridae</taxon>
        <taxon>Pentapetalae</taxon>
        <taxon>rosids</taxon>
        <taxon>malvids</taxon>
        <taxon>Brassicales</taxon>
        <taxon>Brassicaceae</taxon>
        <taxon>Camelineae</taxon>
        <taxon>Arabidopsis</taxon>
    </lineage>
</organism>
<feature type="chain" id="PRO_0000293122" description="Cyclin-dependent kinase E-1">
    <location>
        <begin position="1"/>
        <end position="470"/>
    </location>
</feature>
<feature type="domain" description="Protein kinase" evidence="2">
    <location>
        <begin position="25"/>
        <end position="333"/>
    </location>
</feature>
<feature type="region of interest" description="Disordered" evidence="4">
    <location>
        <begin position="428"/>
        <end position="470"/>
    </location>
</feature>
<feature type="compositionally biased region" description="Polar residues" evidence="4">
    <location>
        <begin position="432"/>
        <end position="448"/>
    </location>
</feature>
<feature type="active site" description="Proton acceptor" evidence="2 3">
    <location>
        <position position="154"/>
    </location>
</feature>
<feature type="binding site" evidence="2">
    <location>
        <begin position="31"/>
        <end position="39"/>
    </location>
    <ligand>
        <name>ATP</name>
        <dbReference type="ChEBI" id="CHEBI:30616"/>
    </ligand>
</feature>
<feature type="binding site" evidence="2">
    <location>
        <position position="55"/>
    </location>
    <ligand>
        <name>ATP</name>
        <dbReference type="ChEBI" id="CHEBI:30616"/>
    </ligand>
</feature>
<feature type="modified residue" description="Phosphotyrosine" evidence="1">
    <location>
        <position position="36"/>
    </location>
</feature>
<feature type="sequence conflict" description="In Ref. 4; AAO64158 and 6; BAF00561." evidence="9" ref="4 6">
    <original>K</original>
    <variation>E</variation>
    <location>
        <position position="452"/>
    </location>
</feature>
<proteinExistence type="evidence at protein level"/>
<dbReference type="EC" id="2.7.11.22"/>
<dbReference type="EC" id="2.7.11.23"/>
<dbReference type="EMBL" id="AY600243">
    <property type="protein sequence ID" value="AAT36644.1"/>
    <property type="molecule type" value="mRNA"/>
</dbReference>
<dbReference type="EMBL" id="AB005234">
    <property type="protein sequence ID" value="BAB10454.1"/>
    <property type="molecule type" value="Genomic_DNA"/>
</dbReference>
<dbReference type="EMBL" id="CP002688">
    <property type="protein sequence ID" value="AED97776.1"/>
    <property type="molecule type" value="Genomic_DNA"/>
</dbReference>
<dbReference type="EMBL" id="BT005753">
    <property type="protein sequence ID" value="AAO64158.1"/>
    <property type="molecule type" value="mRNA"/>
</dbReference>
<dbReference type="EMBL" id="BT020376">
    <property type="protein sequence ID" value="AAV85731.1"/>
    <property type="molecule type" value="mRNA"/>
</dbReference>
<dbReference type="EMBL" id="AK228654">
    <property type="protein sequence ID" value="BAF00561.1"/>
    <property type="molecule type" value="mRNA"/>
</dbReference>
<dbReference type="EMBL" id="AJ439879">
    <property type="protein sequence ID" value="CAD29165.1"/>
    <property type="status" value="ALT_FRAME"/>
    <property type="molecule type" value="mRNA"/>
</dbReference>
<dbReference type="SMR" id="Q84TI6"/>
<dbReference type="BioGRID" id="21723">
    <property type="interactions" value="26"/>
</dbReference>
<dbReference type="FunCoup" id="Q84TI6">
    <property type="interactions" value="5266"/>
</dbReference>
<dbReference type="IntAct" id="Q84TI6">
    <property type="interactions" value="4"/>
</dbReference>
<dbReference type="STRING" id="3702.Q84TI6"/>
<dbReference type="PaxDb" id="3702-AT5G63610.1"/>
<dbReference type="ProteomicsDB" id="223976"/>
<dbReference type="EnsemblPlants" id="AT5G63610.1">
    <property type="protein sequence ID" value="AT5G63610.1"/>
    <property type="gene ID" value="AT5G63610"/>
</dbReference>
<dbReference type="GeneID" id="836481"/>
<dbReference type="Gramene" id="AT5G63610.1">
    <property type="protein sequence ID" value="AT5G63610.1"/>
    <property type="gene ID" value="AT5G63610"/>
</dbReference>
<dbReference type="KEGG" id="ath:AT5G63610"/>
<dbReference type="Araport" id="AT5G63610"/>
<dbReference type="TAIR" id="AT5G63610">
    <property type="gene designation" value="CDKE"/>
</dbReference>
<dbReference type="eggNOG" id="KOG0666">
    <property type="taxonomic scope" value="Eukaryota"/>
</dbReference>
<dbReference type="HOGENOM" id="CLU_000288_181_6_1"/>
<dbReference type="InParanoid" id="Q84TI6"/>
<dbReference type="OMA" id="YFKNGGP"/>
<dbReference type="OrthoDB" id="6284126at2759"/>
<dbReference type="PhylomeDB" id="Q84TI6"/>
<dbReference type="PRO" id="PR:Q84TI6"/>
<dbReference type="Proteomes" id="UP000006548">
    <property type="component" value="Chromosome 5"/>
</dbReference>
<dbReference type="ExpressionAtlas" id="Q84TI6">
    <property type="expression patterns" value="baseline and differential"/>
</dbReference>
<dbReference type="GO" id="GO:0005634">
    <property type="term" value="C:nucleus"/>
    <property type="evidence" value="ECO:0000314"/>
    <property type="project" value="UniProtKB"/>
</dbReference>
<dbReference type="GO" id="GO:0005524">
    <property type="term" value="F:ATP binding"/>
    <property type="evidence" value="ECO:0007669"/>
    <property type="project" value="UniProtKB-KW"/>
</dbReference>
<dbReference type="GO" id="GO:0004693">
    <property type="term" value="F:cyclin-dependent protein serine/threonine kinase activity"/>
    <property type="evidence" value="ECO:0007669"/>
    <property type="project" value="UniProtKB-EC"/>
</dbReference>
<dbReference type="GO" id="GO:0019900">
    <property type="term" value="F:kinase binding"/>
    <property type="evidence" value="ECO:0000353"/>
    <property type="project" value="UniProtKB"/>
</dbReference>
<dbReference type="GO" id="GO:0106310">
    <property type="term" value="F:protein serine kinase activity"/>
    <property type="evidence" value="ECO:0007669"/>
    <property type="project" value="RHEA"/>
</dbReference>
<dbReference type="GO" id="GO:0008353">
    <property type="term" value="F:RNA polymerase II CTD heptapeptide repeat kinase activity"/>
    <property type="evidence" value="ECO:0007669"/>
    <property type="project" value="UniProtKB-EC"/>
</dbReference>
<dbReference type="GO" id="GO:0051301">
    <property type="term" value="P:cell division"/>
    <property type="evidence" value="ECO:0007669"/>
    <property type="project" value="UniProtKB-KW"/>
</dbReference>
<dbReference type="CDD" id="cd07842">
    <property type="entry name" value="STKc_CDK8_like"/>
    <property type="match status" value="1"/>
</dbReference>
<dbReference type="FunFam" id="3.30.200.20:FF:000350">
    <property type="entry name" value="Cyclin-dependent kinase e-1"/>
    <property type="match status" value="1"/>
</dbReference>
<dbReference type="FunFam" id="1.10.510.10:FF:000374">
    <property type="entry name" value="Putative cyclin-dependent kinase E-1"/>
    <property type="match status" value="1"/>
</dbReference>
<dbReference type="Gene3D" id="3.30.200.20">
    <property type="entry name" value="Phosphorylase Kinase, domain 1"/>
    <property type="match status" value="1"/>
</dbReference>
<dbReference type="Gene3D" id="1.10.510.10">
    <property type="entry name" value="Transferase(Phosphotransferase) domain 1"/>
    <property type="match status" value="1"/>
</dbReference>
<dbReference type="InterPro" id="IPR050108">
    <property type="entry name" value="CDK"/>
</dbReference>
<dbReference type="InterPro" id="IPR011009">
    <property type="entry name" value="Kinase-like_dom_sf"/>
</dbReference>
<dbReference type="InterPro" id="IPR000719">
    <property type="entry name" value="Prot_kinase_dom"/>
</dbReference>
<dbReference type="InterPro" id="IPR017441">
    <property type="entry name" value="Protein_kinase_ATP_BS"/>
</dbReference>
<dbReference type="InterPro" id="IPR008271">
    <property type="entry name" value="Ser/Thr_kinase_AS"/>
</dbReference>
<dbReference type="PANTHER" id="PTHR24056">
    <property type="entry name" value="CELL DIVISION PROTEIN KINASE"/>
    <property type="match status" value="1"/>
</dbReference>
<dbReference type="PANTHER" id="PTHR24056:SF495">
    <property type="entry name" value="CYCLIN-DEPENDENT KINASE 8-RELATED"/>
    <property type="match status" value="1"/>
</dbReference>
<dbReference type="Pfam" id="PF00069">
    <property type="entry name" value="Pkinase"/>
    <property type="match status" value="1"/>
</dbReference>
<dbReference type="SMART" id="SM00220">
    <property type="entry name" value="S_TKc"/>
    <property type="match status" value="1"/>
</dbReference>
<dbReference type="SUPFAM" id="SSF56112">
    <property type="entry name" value="Protein kinase-like (PK-like)"/>
    <property type="match status" value="1"/>
</dbReference>
<dbReference type="PROSITE" id="PS00107">
    <property type="entry name" value="PROTEIN_KINASE_ATP"/>
    <property type="match status" value="1"/>
</dbReference>
<dbReference type="PROSITE" id="PS50011">
    <property type="entry name" value="PROTEIN_KINASE_DOM"/>
    <property type="match status" value="1"/>
</dbReference>
<dbReference type="PROSITE" id="PS00108">
    <property type="entry name" value="PROTEIN_KINASE_ST"/>
    <property type="match status" value="1"/>
</dbReference>
<name>CDKE1_ARATH</name>
<comment type="function">
    <text evidence="5">Involved in cell differentiation. Required for the specification of stamen and carpel identities and for the proper termination of stem cells in the floral meristem.</text>
</comment>
<comment type="catalytic activity">
    <reaction>
        <text>L-seryl-[protein] + ATP = O-phospho-L-seryl-[protein] + ADP + H(+)</text>
        <dbReference type="Rhea" id="RHEA:17989"/>
        <dbReference type="Rhea" id="RHEA-COMP:9863"/>
        <dbReference type="Rhea" id="RHEA-COMP:11604"/>
        <dbReference type="ChEBI" id="CHEBI:15378"/>
        <dbReference type="ChEBI" id="CHEBI:29999"/>
        <dbReference type="ChEBI" id="CHEBI:30616"/>
        <dbReference type="ChEBI" id="CHEBI:83421"/>
        <dbReference type="ChEBI" id="CHEBI:456216"/>
        <dbReference type="EC" id="2.7.11.22"/>
    </reaction>
</comment>
<comment type="catalytic activity">
    <reaction>
        <text>L-threonyl-[protein] + ATP = O-phospho-L-threonyl-[protein] + ADP + H(+)</text>
        <dbReference type="Rhea" id="RHEA:46608"/>
        <dbReference type="Rhea" id="RHEA-COMP:11060"/>
        <dbReference type="Rhea" id="RHEA-COMP:11605"/>
        <dbReference type="ChEBI" id="CHEBI:15378"/>
        <dbReference type="ChEBI" id="CHEBI:30013"/>
        <dbReference type="ChEBI" id="CHEBI:30616"/>
        <dbReference type="ChEBI" id="CHEBI:61977"/>
        <dbReference type="ChEBI" id="CHEBI:456216"/>
        <dbReference type="EC" id="2.7.11.22"/>
    </reaction>
</comment>
<comment type="catalytic activity">
    <reaction>
        <text>[DNA-directed RNA polymerase] + ATP = phospho-[DNA-directed RNA polymerase] + ADP + H(+)</text>
        <dbReference type="Rhea" id="RHEA:10216"/>
        <dbReference type="Rhea" id="RHEA-COMP:11321"/>
        <dbReference type="Rhea" id="RHEA-COMP:11322"/>
        <dbReference type="ChEBI" id="CHEBI:15378"/>
        <dbReference type="ChEBI" id="CHEBI:30616"/>
        <dbReference type="ChEBI" id="CHEBI:43176"/>
        <dbReference type="ChEBI" id="CHEBI:68546"/>
        <dbReference type="ChEBI" id="CHEBI:456216"/>
        <dbReference type="EC" id="2.7.11.23"/>
    </reaction>
</comment>
<comment type="subunit">
    <text evidence="6 7">Interacts with MED14, HDA19 and LUG. Interacts with KIN10 (PubMed:23229550).</text>
</comment>
<comment type="subcellular location">
    <subcellularLocation>
        <location evidence="7">Nucleus</location>
    </subcellularLocation>
</comment>
<comment type="tissue specificity">
    <text evidence="5">Expressed in roots, leaves and stems. Expressed in young dividing tissue, such as shoot and root tips, lateral root primordia, young leaves and flowers. Expressed in the inflorescence meristem, inflorescence stem and young flowers.</text>
</comment>
<comment type="similarity">
    <text evidence="9">Belongs to the protein kinase superfamily. CMGC Ser/Thr protein kinase family. CDC2/CDKX subfamily.</text>
</comment>
<comment type="sequence caution" evidence="9">
    <conflict type="frameshift">
        <sequence resource="EMBL-CDS" id="CAD29165"/>
    </conflict>
</comment>
<reference key="1">
    <citation type="journal article" date="2004" name="Development">
        <title>HUA ENHANCER3 reveals a role for a cyclin-dependent protein kinase in the specification of floral organ identity in Arabidopsis.</title>
        <authorList>
            <person name="Wang W."/>
            <person name="Chen X."/>
        </authorList>
    </citation>
    <scope>NUCLEOTIDE SEQUENCE [MRNA]</scope>
    <scope>FUNCTION</scope>
    <scope>TISSUE SPECIFICITY</scope>
</reference>
<reference key="2">
    <citation type="journal article" date="1997" name="DNA Res.">
        <title>Structural analysis of Arabidopsis thaliana chromosome 5. I. Sequence features of the 1.6 Mb regions covered by twenty physically assigned P1 clones.</title>
        <authorList>
            <person name="Sato S."/>
            <person name="Kotani H."/>
            <person name="Nakamura Y."/>
            <person name="Kaneko T."/>
            <person name="Asamizu E."/>
            <person name="Fukami M."/>
            <person name="Miyajima N."/>
            <person name="Tabata S."/>
        </authorList>
    </citation>
    <scope>NUCLEOTIDE SEQUENCE [LARGE SCALE GENOMIC DNA]</scope>
    <source>
        <strain>cv. Columbia</strain>
    </source>
</reference>
<reference key="3">
    <citation type="journal article" date="2017" name="Plant J.">
        <title>Araport11: a complete reannotation of the Arabidopsis thaliana reference genome.</title>
        <authorList>
            <person name="Cheng C.Y."/>
            <person name="Krishnakumar V."/>
            <person name="Chan A.P."/>
            <person name="Thibaud-Nissen F."/>
            <person name="Schobel S."/>
            <person name="Town C.D."/>
        </authorList>
    </citation>
    <scope>GENOME REANNOTATION</scope>
    <source>
        <strain>cv. Columbia</strain>
    </source>
</reference>
<reference key="4">
    <citation type="journal article" date="2003" name="Science">
        <title>Empirical analysis of transcriptional activity in the Arabidopsis genome.</title>
        <authorList>
            <person name="Yamada K."/>
            <person name="Lim J."/>
            <person name="Dale J.M."/>
            <person name="Chen H."/>
            <person name="Shinn P."/>
            <person name="Palm C.J."/>
            <person name="Southwick A.M."/>
            <person name="Wu H.C."/>
            <person name="Kim C.J."/>
            <person name="Nguyen M."/>
            <person name="Pham P.K."/>
            <person name="Cheuk R.F."/>
            <person name="Karlin-Newmann G."/>
            <person name="Liu S.X."/>
            <person name="Lam B."/>
            <person name="Sakano H."/>
            <person name="Wu T."/>
            <person name="Yu G."/>
            <person name="Miranda M."/>
            <person name="Quach H.L."/>
            <person name="Tripp M."/>
            <person name="Chang C.H."/>
            <person name="Lee J.M."/>
            <person name="Toriumi M.J."/>
            <person name="Chan M.M."/>
            <person name="Tang C.C."/>
            <person name="Onodera C.S."/>
            <person name="Deng J.M."/>
            <person name="Akiyama K."/>
            <person name="Ansari Y."/>
            <person name="Arakawa T."/>
            <person name="Banh J."/>
            <person name="Banno F."/>
            <person name="Bowser L."/>
            <person name="Brooks S.Y."/>
            <person name="Carninci P."/>
            <person name="Chao Q."/>
            <person name="Choy N."/>
            <person name="Enju A."/>
            <person name="Goldsmith A.D."/>
            <person name="Gurjal M."/>
            <person name="Hansen N.F."/>
            <person name="Hayashizaki Y."/>
            <person name="Johnson-Hopson C."/>
            <person name="Hsuan V.W."/>
            <person name="Iida K."/>
            <person name="Karnes M."/>
            <person name="Khan S."/>
            <person name="Koesema E."/>
            <person name="Ishida J."/>
            <person name="Jiang P.X."/>
            <person name="Jones T."/>
            <person name="Kawai J."/>
            <person name="Kamiya A."/>
            <person name="Meyers C."/>
            <person name="Nakajima M."/>
            <person name="Narusaka M."/>
            <person name="Seki M."/>
            <person name="Sakurai T."/>
            <person name="Satou M."/>
            <person name="Tamse R."/>
            <person name="Vaysberg M."/>
            <person name="Wallender E.K."/>
            <person name="Wong C."/>
            <person name="Yamamura Y."/>
            <person name="Yuan S."/>
            <person name="Shinozaki K."/>
            <person name="Davis R.W."/>
            <person name="Theologis A."/>
            <person name="Ecker J.R."/>
        </authorList>
    </citation>
    <scope>NUCLEOTIDE SEQUENCE [LARGE SCALE MRNA]</scope>
    <source>
        <strain>cv. Columbia</strain>
    </source>
</reference>
<reference key="5">
    <citation type="submission" date="2004-12" db="EMBL/GenBank/DDBJ databases">
        <title>Arabidopsis ORF clones.</title>
        <authorList>
            <person name="Cheuk R.F."/>
            <person name="Chen H."/>
            <person name="Kim C.J."/>
            <person name="Shinn P."/>
            <person name="Ecker J.R."/>
        </authorList>
    </citation>
    <scope>NUCLEOTIDE SEQUENCE [LARGE SCALE MRNA]</scope>
    <source>
        <strain>cv. Columbia</strain>
    </source>
</reference>
<reference key="6">
    <citation type="submission" date="2006-07" db="EMBL/GenBank/DDBJ databases">
        <title>Large-scale analysis of RIKEN Arabidopsis full-length (RAFL) cDNAs.</title>
        <authorList>
            <person name="Totoki Y."/>
            <person name="Seki M."/>
            <person name="Ishida J."/>
            <person name="Nakajima M."/>
            <person name="Enju A."/>
            <person name="Kamiya A."/>
            <person name="Narusaka M."/>
            <person name="Shin-i T."/>
            <person name="Nakagawa M."/>
            <person name="Sakamoto N."/>
            <person name="Oishi K."/>
            <person name="Kohara Y."/>
            <person name="Kobayashi M."/>
            <person name="Toyoda A."/>
            <person name="Sakaki Y."/>
            <person name="Sakurai T."/>
            <person name="Iida K."/>
            <person name="Akiyama K."/>
            <person name="Satou M."/>
            <person name="Toyoda T."/>
            <person name="Konagaya A."/>
            <person name="Carninci P."/>
            <person name="Kawai J."/>
            <person name="Hayashizaki Y."/>
            <person name="Shinozaki K."/>
        </authorList>
    </citation>
    <scope>NUCLEOTIDE SEQUENCE [LARGE SCALE MRNA]</scope>
    <source>
        <strain>cv. Columbia</strain>
    </source>
</reference>
<reference key="7">
    <citation type="submission" date="2002-03" db="EMBL/GenBank/DDBJ databases">
        <title>The identification of Arabidopsis cyclin-dependent kinase 8.</title>
        <authorList>
            <person name="Pu S.Y."/>
            <person name="Huang H.J."/>
        </authorList>
    </citation>
    <scope>NUCLEOTIDE SEQUENCE [MRNA] OF 170-470</scope>
</reference>
<reference key="8">
    <citation type="journal article" date="2002" name="Plant Cell">
        <title>Genome-wide analysis of core cell cycle genes in Arabidopsis.</title>
        <authorList>
            <person name="Vandepoele K."/>
            <person name="Raes J."/>
            <person name="de Veylder L."/>
            <person name="Rouze P."/>
            <person name="Rombauts S."/>
            <person name="Inze D."/>
        </authorList>
    </citation>
    <scope>GENE FAMILY</scope>
    <scope>NOMENCLATURE</scope>
</reference>
<reference key="9">
    <citation type="journal article" date="2006" name="Annu. Rev. Genet.">
        <title>Cell cycle regulation in plant development.</title>
        <authorList>
            <person name="Inze D."/>
            <person name="de Veylder L."/>
        </authorList>
    </citation>
    <scope>REVIEW</scope>
</reference>
<reference key="10">
    <citation type="journal article" date="2007" name="Mol. Cell. Biol.">
        <title>The transcription corepressor LEUNIG interacts with the histone deacetylase HDA19 and mediator components MED14 (SWP) and CDK8 (HEN3) to repress transcription.</title>
        <authorList>
            <person name="Gonzalez D."/>
            <person name="Bowen A.J."/>
            <person name="Carroll T.S."/>
            <person name="Conlan R.S."/>
        </authorList>
    </citation>
    <scope>INTERACTION WITH MED14; LUG AND HDA19</scope>
</reference>
<reference key="11">
    <citation type="journal article" date="2013" name="J. Biol. Chem.">
        <title>Cyclin-dependent kinase E1 (CDKE1) provides a cellular switch in plants between growth and stress responses.</title>
        <authorList>
            <person name="Ng S."/>
            <person name="Giraud E."/>
            <person name="Duncan O."/>
            <person name="Law S.R."/>
            <person name="Wang Y."/>
            <person name="Xu L."/>
            <person name="Narsai R."/>
            <person name="Carrie C."/>
            <person name="Walker H."/>
            <person name="Day D.A."/>
            <person name="Blanco N.E."/>
            <person name="Strand A."/>
            <person name="Whelan J."/>
            <person name="Ivanova A."/>
        </authorList>
    </citation>
    <scope>INTERACTION WITH KIN10</scope>
    <scope>SUBCELLULAR LOCATION</scope>
</reference>
<evidence type="ECO:0000250" key="1">
    <source>
        <dbReference type="UniProtKB" id="P24100"/>
    </source>
</evidence>
<evidence type="ECO:0000255" key="2">
    <source>
        <dbReference type="PROSITE-ProRule" id="PRU00159"/>
    </source>
</evidence>
<evidence type="ECO:0000255" key="3">
    <source>
        <dbReference type="PROSITE-ProRule" id="PRU10027"/>
    </source>
</evidence>
<evidence type="ECO:0000256" key="4">
    <source>
        <dbReference type="SAM" id="MobiDB-lite"/>
    </source>
</evidence>
<evidence type="ECO:0000269" key="5">
    <source>
    </source>
</evidence>
<evidence type="ECO:0000269" key="6">
    <source>
    </source>
</evidence>
<evidence type="ECO:0000269" key="7">
    <source>
    </source>
</evidence>
<evidence type="ECO:0000303" key="8">
    <source>
    </source>
</evidence>
<evidence type="ECO:0000305" key="9"/>
<evidence type="ECO:0000312" key="10">
    <source>
        <dbReference type="Araport" id="AT5G63610"/>
    </source>
</evidence>
<evidence type="ECO:0000312" key="11">
    <source>
        <dbReference type="EMBL" id="AAT36644.1"/>
    </source>
</evidence>
<evidence type="ECO:0000312" key="12">
    <source>
        <dbReference type="EMBL" id="BAB10454.1"/>
    </source>
</evidence>
<accession>Q84TI6</accession>
<accession>Q70Z09</accession>
<accession>Q9FFQ3</accession>
<protein>
    <recommendedName>
        <fullName>Cyclin-dependent kinase E-1</fullName>
        <shortName>CDKE;1</shortName>
        <ecNumber>2.7.11.22</ecNumber>
        <ecNumber>2.7.11.23</ecNumber>
    </recommendedName>
    <alternativeName>
        <fullName>Cyclin-dependent kinase 8</fullName>
    </alternativeName>
    <alternativeName>
        <fullName evidence="11">Protein HUA ENHANCER 3</fullName>
    </alternativeName>
</protein>
<keyword id="KW-0067">ATP-binding</keyword>
<keyword id="KW-0131">Cell cycle</keyword>
<keyword id="KW-0132">Cell division</keyword>
<keyword id="KW-0418">Kinase</keyword>
<keyword id="KW-0547">Nucleotide-binding</keyword>
<keyword id="KW-0539">Nucleus</keyword>
<keyword id="KW-0597">Phosphoprotein</keyword>
<keyword id="KW-1185">Reference proteome</keyword>
<keyword id="KW-0723">Serine/threonine-protein kinase</keyword>
<keyword id="KW-0808">Transferase</keyword>
<sequence>MGDGSSSRSNSSNSTSEKPEWLQQYNLVGKIGEGTYGLVFLARTKTPPKRPIAIKKFKQSKDGDGVSPTAIREIMLLREISHENVVKLVNVHINFADMSLYLAFDYAEYDLYEIIRHHRDKVGHSLNTYTVKSLLWQLLNGLNYLHSNWIIHRDLKPSNILVMGDAEEHGIVKIADFGLARIYQAPLKPLSDNGVVVTIWYRAPELLLGSKHYTSAVDMWAVGCIFAELLTLKPLFQGAEAKSSQNPFQLDQLDKIFKILGHPTMDKWPTLVNLPHWQNDVQHIQAHKYDSVGLHNVVHLNQKSPAYDLLSKMLEYDPLKRITASQALEHEYFRMDPLPGRNAFVASQPMEKNVNYPTRPVDTNTDFEGTTSINPPQAVAAGNVAGNMAGAHGMGSRSMPRPMVAHNMQRMQQSQGMMAYNFPAQAGLNPSVPLQQQRGMAQPHQQQQLRRKDPGMGMSGYAPPNKSRRL</sequence>